<organism>
    <name type="scientific">Synechococcus sp. (strain JA-3-3Ab)</name>
    <name type="common">Cyanobacteria bacterium Yellowstone A-Prime</name>
    <dbReference type="NCBI Taxonomy" id="321327"/>
    <lineage>
        <taxon>Bacteria</taxon>
        <taxon>Bacillati</taxon>
        <taxon>Cyanobacteriota</taxon>
        <taxon>Cyanophyceae</taxon>
        <taxon>Synechococcales</taxon>
        <taxon>Synechococcaceae</taxon>
        <taxon>Synechococcus</taxon>
    </lineage>
</organism>
<gene>
    <name evidence="1" type="primary">rplF</name>
    <name evidence="1" type="synonym">rpl6</name>
    <name type="ordered locus">CYA_1164</name>
</gene>
<feature type="chain" id="PRO_0000260963" description="Large ribosomal subunit protein uL6">
    <location>
        <begin position="1"/>
        <end position="181"/>
    </location>
</feature>
<keyword id="KW-0687">Ribonucleoprotein</keyword>
<keyword id="KW-0689">Ribosomal protein</keyword>
<keyword id="KW-0694">RNA-binding</keyword>
<keyword id="KW-0699">rRNA-binding</keyword>
<name>RL6_SYNJA</name>
<protein>
    <recommendedName>
        <fullName evidence="1">Large ribosomal subunit protein uL6</fullName>
    </recommendedName>
    <alternativeName>
        <fullName evidence="2">50S ribosomal protein L6</fullName>
    </alternativeName>
</protein>
<evidence type="ECO:0000255" key="1">
    <source>
        <dbReference type="HAMAP-Rule" id="MF_01365"/>
    </source>
</evidence>
<evidence type="ECO:0000305" key="2"/>
<sequence>MSRIGKRPIALPAKVEVQIEGQQISVKGPKGELSRSLPPLIAVHQEAQTLKVSRVNESRPARQLHGLCRTLVANMVDGVSRGFERRLELVGVGYRASTQGNKLILNVGYSHPVEIPFPPGIQIAVEGNNVIVVSGIDKELVGNTAARIRAVRPPEPYKGKGIRYVGEQVRRKAGKSGKAKK</sequence>
<reference key="1">
    <citation type="journal article" date="2007" name="ISME J.">
        <title>Population level functional diversity in a microbial community revealed by comparative genomic and metagenomic analyses.</title>
        <authorList>
            <person name="Bhaya D."/>
            <person name="Grossman A.R."/>
            <person name="Steunou A.-S."/>
            <person name="Khuri N."/>
            <person name="Cohan F.M."/>
            <person name="Hamamura N."/>
            <person name="Melendrez M.C."/>
            <person name="Bateson M.M."/>
            <person name="Ward D.M."/>
            <person name="Heidelberg J.F."/>
        </authorList>
    </citation>
    <scope>NUCLEOTIDE SEQUENCE [LARGE SCALE GENOMIC DNA]</scope>
    <source>
        <strain>JA-3-3Ab</strain>
    </source>
</reference>
<proteinExistence type="inferred from homology"/>
<dbReference type="EMBL" id="CP000239">
    <property type="protein sequence ID" value="ABC99352.1"/>
    <property type="molecule type" value="Genomic_DNA"/>
</dbReference>
<dbReference type="RefSeq" id="WP_011430033.1">
    <property type="nucleotide sequence ID" value="NC_007775.1"/>
</dbReference>
<dbReference type="SMR" id="Q2JQN4"/>
<dbReference type="STRING" id="321327.CYA_1164"/>
<dbReference type="KEGG" id="cya:CYA_1164"/>
<dbReference type="eggNOG" id="COG0097">
    <property type="taxonomic scope" value="Bacteria"/>
</dbReference>
<dbReference type="HOGENOM" id="CLU_065464_1_2_3"/>
<dbReference type="OrthoDB" id="9805007at2"/>
<dbReference type="Proteomes" id="UP000008818">
    <property type="component" value="Chromosome"/>
</dbReference>
<dbReference type="GO" id="GO:0022625">
    <property type="term" value="C:cytosolic large ribosomal subunit"/>
    <property type="evidence" value="ECO:0007669"/>
    <property type="project" value="TreeGrafter"/>
</dbReference>
<dbReference type="GO" id="GO:0019843">
    <property type="term" value="F:rRNA binding"/>
    <property type="evidence" value="ECO:0007669"/>
    <property type="project" value="UniProtKB-UniRule"/>
</dbReference>
<dbReference type="GO" id="GO:0003735">
    <property type="term" value="F:structural constituent of ribosome"/>
    <property type="evidence" value="ECO:0007669"/>
    <property type="project" value="InterPro"/>
</dbReference>
<dbReference type="GO" id="GO:0002181">
    <property type="term" value="P:cytoplasmic translation"/>
    <property type="evidence" value="ECO:0007669"/>
    <property type="project" value="TreeGrafter"/>
</dbReference>
<dbReference type="FunFam" id="3.90.930.12:FF:000001">
    <property type="entry name" value="50S ribosomal protein L6"/>
    <property type="match status" value="1"/>
</dbReference>
<dbReference type="FunFam" id="3.90.930.12:FF:000002">
    <property type="entry name" value="50S ribosomal protein L6"/>
    <property type="match status" value="1"/>
</dbReference>
<dbReference type="Gene3D" id="3.90.930.12">
    <property type="entry name" value="Ribosomal protein L6, alpha-beta domain"/>
    <property type="match status" value="2"/>
</dbReference>
<dbReference type="HAMAP" id="MF_01365_B">
    <property type="entry name" value="Ribosomal_uL6_B"/>
    <property type="match status" value="1"/>
</dbReference>
<dbReference type="InterPro" id="IPR000702">
    <property type="entry name" value="Ribosomal_uL6-like"/>
</dbReference>
<dbReference type="InterPro" id="IPR036789">
    <property type="entry name" value="Ribosomal_uL6-like_a/b-dom_sf"/>
</dbReference>
<dbReference type="InterPro" id="IPR020040">
    <property type="entry name" value="Ribosomal_uL6_a/b-dom"/>
</dbReference>
<dbReference type="InterPro" id="IPR019906">
    <property type="entry name" value="Ribosomal_uL6_bac-type"/>
</dbReference>
<dbReference type="InterPro" id="IPR002358">
    <property type="entry name" value="Ribosomal_uL6_CS"/>
</dbReference>
<dbReference type="NCBIfam" id="TIGR03654">
    <property type="entry name" value="L6_bact"/>
    <property type="match status" value="1"/>
</dbReference>
<dbReference type="PANTHER" id="PTHR11655">
    <property type="entry name" value="60S/50S RIBOSOMAL PROTEIN L6/L9"/>
    <property type="match status" value="1"/>
</dbReference>
<dbReference type="PANTHER" id="PTHR11655:SF14">
    <property type="entry name" value="LARGE RIBOSOMAL SUBUNIT PROTEIN UL6M"/>
    <property type="match status" value="1"/>
</dbReference>
<dbReference type="Pfam" id="PF00347">
    <property type="entry name" value="Ribosomal_L6"/>
    <property type="match status" value="2"/>
</dbReference>
<dbReference type="PIRSF" id="PIRSF002162">
    <property type="entry name" value="Ribosomal_L6"/>
    <property type="match status" value="1"/>
</dbReference>
<dbReference type="PRINTS" id="PR00059">
    <property type="entry name" value="RIBOSOMALL6"/>
</dbReference>
<dbReference type="SUPFAM" id="SSF56053">
    <property type="entry name" value="Ribosomal protein L6"/>
    <property type="match status" value="2"/>
</dbReference>
<dbReference type="PROSITE" id="PS00525">
    <property type="entry name" value="RIBOSOMAL_L6_1"/>
    <property type="match status" value="1"/>
</dbReference>
<comment type="function">
    <text evidence="1">This protein binds to the 23S rRNA, and is important in its secondary structure. It is located near the subunit interface in the base of the L7/L12 stalk, and near the tRNA binding site of the peptidyltransferase center.</text>
</comment>
<comment type="subunit">
    <text evidence="1">Part of the 50S ribosomal subunit.</text>
</comment>
<comment type="similarity">
    <text evidence="1">Belongs to the universal ribosomal protein uL6 family.</text>
</comment>
<accession>Q2JQN4</accession>